<feature type="chain" id="PRO_1000054684" description="Large ribosomal subunit protein uL16">
    <location>
        <begin position="1"/>
        <end position="137"/>
    </location>
</feature>
<dbReference type="EMBL" id="CP000712">
    <property type="protein sequence ID" value="ABQ76664.1"/>
    <property type="molecule type" value="Genomic_DNA"/>
</dbReference>
<dbReference type="SMR" id="A5VXQ4"/>
<dbReference type="KEGG" id="ppf:Pput_0494"/>
<dbReference type="eggNOG" id="COG0197">
    <property type="taxonomic scope" value="Bacteria"/>
</dbReference>
<dbReference type="HOGENOM" id="CLU_078858_2_1_6"/>
<dbReference type="GO" id="GO:0022625">
    <property type="term" value="C:cytosolic large ribosomal subunit"/>
    <property type="evidence" value="ECO:0007669"/>
    <property type="project" value="TreeGrafter"/>
</dbReference>
<dbReference type="GO" id="GO:0019843">
    <property type="term" value="F:rRNA binding"/>
    <property type="evidence" value="ECO:0007669"/>
    <property type="project" value="UniProtKB-UniRule"/>
</dbReference>
<dbReference type="GO" id="GO:0003735">
    <property type="term" value="F:structural constituent of ribosome"/>
    <property type="evidence" value="ECO:0007669"/>
    <property type="project" value="InterPro"/>
</dbReference>
<dbReference type="GO" id="GO:0000049">
    <property type="term" value="F:tRNA binding"/>
    <property type="evidence" value="ECO:0007669"/>
    <property type="project" value="UniProtKB-KW"/>
</dbReference>
<dbReference type="GO" id="GO:0006412">
    <property type="term" value="P:translation"/>
    <property type="evidence" value="ECO:0007669"/>
    <property type="project" value="UniProtKB-UniRule"/>
</dbReference>
<dbReference type="CDD" id="cd01433">
    <property type="entry name" value="Ribosomal_L16_L10e"/>
    <property type="match status" value="1"/>
</dbReference>
<dbReference type="FunFam" id="3.90.1170.10:FF:000001">
    <property type="entry name" value="50S ribosomal protein L16"/>
    <property type="match status" value="1"/>
</dbReference>
<dbReference type="Gene3D" id="3.90.1170.10">
    <property type="entry name" value="Ribosomal protein L10e/L16"/>
    <property type="match status" value="1"/>
</dbReference>
<dbReference type="HAMAP" id="MF_01342">
    <property type="entry name" value="Ribosomal_uL16"/>
    <property type="match status" value="1"/>
</dbReference>
<dbReference type="InterPro" id="IPR047873">
    <property type="entry name" value="Ribosomal_uL16"/>
</dbReference>
<dbReference type="InterPro" id="IPR000114">
    <property type="entry name" value="Ribosomal_uL16_bact-type"/>
</dbReference>
<dbReference type="InterPro" id="IPR020798">
    <property type="entry name" value="Ribosomal_uL16_CS"/>
</dbReference>
<dbReference type="InterPro" id="IPR016180">
    <property type="entry name" value="Ribosomal_uL16_dom"/>
</dbReference>
<dbReference type="InterPro" id="IPR036920">
    <property type="entry name" value="Ribosomal_uL16_sf"/>
</dbReference>
<dbReference type="NCBIfam" id="TIGR01164">
    <property type="entry name" value="rplP_bact"/>
    <property type="match status" value="1"/>
</dbReference>
<dbReference type="PANTHER" id="PTHR12220">
    <property type="entry name" value="50S/60S RIBOSOMAL PROTEIN L16"/>
    <property type="match status" value="1"/>
</dbReference>
<dbReference type="PANTHER" id="PTHR12220:SF13">
    <property type="entry name" value="LARGE RIBOSOMAL SUBUNIT PROTEIN UL16M"/>
    <property type="match status" value="1"/>
</dbReference>
<dbReference type="Pfam" id="PF00252">
    <property type="entry name" value="Ribosomal_L16"/>
    <property type="match status" value="1"/>
</dbReference>
<dbReference type="PRINTS" id="PR00060">
    <property type="entry name" value="RIBOSOMALL16"/>
</dbReference>
<dbReference type="SUPFAM" id="SSF54686">
    <property type="entry name" value="Ribosomal protein L16p/L10e"/>
    <property type="match status" value="1"/>
</dbReference>
<dbReference type="PROSITE" id="PS00586">
    <property type="entry name" value="RIBOSOMAL_L16_1"/>
    <property type="match status" value="1"/>
</dbReference>
<dbReference type="PROSITE" id="PS00701">
    <property type="entry name" value="RIBOSOMAL_L16_2"/>
    <property type="match status" value="1"/>
</dbReference>
<organism>
    <name type="scientific">Pseudomonas putida (strain ATCC 700007 / DSM 6899 / JCM 31910 / BCRC 17059 / LMG 24140 / F1)</name>
    <dbReference type="NCBI Taxonomy" id="351746"/>
    <lineage>
        <taxon>Bacteria</taxon>
        <taxon>Pseudomonadati</taxon>
        <taxon>Pseudomonadota</taxon>
        <taxon>Gammaproteobacteria</taxon>
        <taxon>Pseudomonadales</taxon>
        <taxon>Pseudomonadaceae</taxon>
        <taxon>Pseudomonas</taxon>
    </lineage>
</organism>
<proteinExistence type="inferred from homology"/>
<evidence type="ECO:0000255" key="1">
    <source>
        <dbReference type="HAMAP-Rule" id="MF_01342"/>
    </source>
</evidence>
<evidence type="ECO:0000305" key="2"/>
<accession>A5VXQ4</accession>
<comment type="function">
    <text evidence="1">Binds 23S rRNA and is also seen to make contacts with the A and possibly P site tRNAs.</text>
</comment>
<comment type="subunit">
    <text evidence="1">Part of the 50S ribosomal subunit.</text>
</comment>
<comment type="similarity">
    <text evidence="1">Belongs to the universal ribosomal protein uL16 family.</text>
</comment>
<reference key="1">
    <citation type="submission" date="2007-05" db="EMBL/GenBank/DDBJ databases">
        <title>Complete sequence of Pseudomonas putida F1.</title>
        <authorList>
            <consortium name="US DOE Joint Genome Institute"/>
            <person name="Copeland A."/>
            <person name="Lucas S."/>
            <person name="Lapidus A."/>
            <person name="Barry K."/>
            <person name="Detter J.C."/>
            <person name="Glavina del Rio T."/>
            <person name="Hammon N."/>
            <person name="Israni S."/>
            <person name="Dalin E."/>
            <person name="Tice H."/>
            <person name="Pitluck S."/>
            <person name="Chain P."/>
            <person name="Malfatti S."/>
            <person name="Shin M."/>
            <person name="Vergez L."/>
            <person name="Schmutz J."/>
            <person name="Larimer F."/>
            <person name="Land M."/>
            <person name="Hauser L."/>
            <person name="Kyrpides N."/>
            <person name="Lykidis A."/>
            <person name="Parales R."/>
            <person name="Richardson P."/>
        </authorList>
    </citation>
    <scope>NUCLEOTIDE SEQUENCE [LARGE SCALE GENOMIC DNA]</scope>
    <source>
        <strain>ATCC 700007 / DSM 6899 / JCM 31910 / BCRC 17059 / LMG 24140 / F1</strain>
    </source>
</reference>
<name>RL16_PSEP1</name>
<sequence>MLQPKRTKFRKQMTGHNRGLALRGSKVSFGEFALKAVARGRLTARQIESARRALTRHVKRGGKIWIRVFPDKPISKKPLEVRMGKGKGSVEYWVAQIQPGKVLYEIEGVSEELAREAFALAAAKLPLATSFVKRTVM</sequence>
<protein>
    <recommendedName>
        <fullName evidence="1">Large ribosomal subunit protein uL16</fullName>
    </recommendedName>
    <alternativeName>
        <fullName evidence="2">50S ribosomal protein L16</fullName>
    </alternativeName>
</protein>
<gene>
    <name evidence="1" type="primary">rplP</name>
    <name type="ordered locus">Pput_0494</name>
</gene>
<keyword id="KW-0687">Ribonucleoprotein</keyword>
<keyword id="KW-0689">Ribosomal protein</keyword>
<keyword id="KW-0694">RNA-binding</keyword>
<keyword id="KW-0699">rRNA-binding</keyword>
<keyword id="KW-0820">tRNA-binding</keyword>